<sequence length="682" mass="75583">MHKYDVVVVGGGHAGCEAATAAARLGASTLLITHKISTIGEMSCNPAIGGVAKGVVVREVDALDGIMGRAIDRASIHSVVLNGSRGAAVWGPRAQADRKLYKKAIQEIILNYNNLTVKEESVDDFLIESDSNGESYIKAVITDSGERILTSRVVLTTGTFLRGVIHIGEQTTPSGRIGDKPAIELANTLKKYDFKLGRLRTGTPPRLDRGTINWSVLQEQVGDNPPTPFSYLTEKINQPQVSCFITHTNEHTHRVIRENLHRSASSYLDNVIAPRYCPSIETKVKKFAEKNNHQIFLEPEGIDDNTIYPNGISNSLPIEVQYEMIKSIKGLENAEILRPGYAVEYDYIDPRELFHTLETKKVKGLYFAGQINGTTGYEEAAGQGIIAGINAALSLSQKSFVLHRTDSYIGVMIDDLVTKGITEPYRLFTSRAEYRLAIRSDNADRRLTQKGYDISLVSHERYSVLQGKLKSIKQLEEKLESLTITPEQLRSYGIKISYDGIRKTALDLLGYPNIDWNKLREIWPELNMGSSVSYLHNAKAPLPVIQVADTGIQYLNDDGMDAVDTEKNVDSSVMCWNNTITDSIAKNEIYEAVAIEAKYKPYLVRQEADMKFLQEEVNTQIPTNFNYSQIKGLSTEVIEKLQSIKPATIGIAKQIQGITPAAIVSILVYLRNKKTKIAANSA</sequence>
<reference key="1">
    <citation type="journal article" date="2008" name="Mol. Biol. Evol.">
        <title>Genome evolution of Wolbachia strain wPip from the Culex pipiens group.</title>
        <authorList>
            <person name="Klasson L."/>
            <person name="Walker T."/>
            <person name="Sebaihia M."/>
            <person name="Sanders M.J."/>
            <person name="Quail M.A."/>
            <person name="Lord A."/>
            <person name="Sanders S."/>
            <person name="Earl J."/>
            <person name="O'Neill S.L."/>
            <person name="Thomson N."/>
            <person name="Sinkins S.P."/>
            <person name="Parkhill J."/>
        </authorList>
    </citation>
    <scope>NUCLEOTIDE SEQUENCE [LARGE SCALE GENOMIC DNA]</scope>
    <source>
        <strain>wPip</strain>
    </source>
</reference>
<comment type="function">
    <text evidence="1">NAD-binding protein involved in the addition of a carboxymethylaminomethyl (cmnm) group at the wobble position (U34) of certain tRNAs, forming tRNA-cmnm(5)s(2)U34.</text>
</comment>
<comment type="cofactor">
    <cofactor evidence="1">
        <name>FAD</name>
        <dbReference type="ChEBI" id="CHEBI:57692"/>
    </cofactor>
</comment>
<comment type="subunit">
    <text evidence="1">Homodimer. Heterotetramer of two MnmE and two MnmG subunits.</text>
</comment>
<comment type="subcellular location">
    <subcellularLocation>
        <location evidence="1">Cytoplasm</location>
    </subcellularLocation>
</comment>
<comment type="similarity">
    <text evidence="1">Belongs to the MnmG family.</text>
</comment>
<dbReference type="EMBL" id="AM999887">
    <property type="protein sequence ID" value="CAQ54751.1"/>
    <property type="molecule type" value="Genomic_DNA"/>
</dbReference>
<dbReference type="RefSeq" id="WP_007302065.1">
    <property type="nucleotide sequence ID" value="NC_010981.1"/>
</dbReference>
<dbReference type="SMR" id="B3CLI3"/>
<dbReference type="KEGG" id="wpi:WP0643"/>
<dbReference type="eggNOG" id="COG0445">
    <property type="taxonomic scope" value="Bacteria"/>
</dbReference>
<dbReference type="HOGENOM" id="CLU_007831_2_2_5"/>
<dbReference type="Proteomes" id="UP000008814">
    <property type="component" value="Chromosome"/>
</dbReference>
<dbReference type="GO" id="GO:0005829">
    <property type="term" value="C:cytosol"/>
    <property type="evidence" value="ECO:0007669"/>
    <property type="project" value="TreeGrafter"/>
</dbReference>
<dbReference type="GO" id="GO:0050660">
    <property type="term" value="F:flavin adenine dinucleotide binding"/>
    <property type="evidence" value="ECO:0007669"/>
    <property type="project" value="UniProtKB-UniRule"/>
</dbReference>
<dbReference type="GO" id="GO:0030488">
    <property type="term" value="P:tRNA methylation"/>
    <property type="evidence" value="ECO:0007669"/>
    <property type="project" value="TreeGrafter"/>
</dbReference>
<dbReference type="GO" id="GO:0002098">
    <property type="term" value="P:tRNA wobble uridine modification"/>
    <property type="evidence" value="ECO:0007669"/>
    <property type="project" value="InterPro"/>
</dbReference>
<dbReference type="FunFam" id="3.50.50.60:FF:000082">
    <property type="entry name" value="protein MTO1 homolog, mitochondrial isoform X1"/>
    <property type="match status" value="1"/>
</dbReference>
<dbReference type="FunFam" id="1.10.150.570:FF:000001">
    <property type="entry name" value="tRNA uridine 5-carboxymethylaminomethyl modification enzyme MnmG"/>
    <property type="match status" value="1"/>
</dbReference>
<dbReference type="FunFam" id="3.50.50.60:FF:000002">
    <property type="entry name" value="tRNA uridine 5-carboxymethylaminomethyl modification enzyme MnmG"/>
    <property type="match status" value="1"/>
</dbReference>
<dbReference type="Gene3D" id="3.50.50.60">
    <property type="entry name" value="FAD/NAD(P)-binding domain"/>
    <property type="match status" value="2"/>
</dbReference>
<dbReference type="Gene3D" id="1.10.150.570">
    <property type="entry name" value="GidA associated domain, C-terminal subdomain"/>
    <property type="match status" value="1"/>
</dbReference>
<dbReference type="Gene3D" id="1.10.10.1800">
    <property type="entry name" value="tRNA uridine 5-carboxymethylaminomethyl modification enzyme MnmG/GidA"/>
    <property type="match status" value="1"/>
</dbReference>
<dbReference type="HAMAP" id="MF_00129">
    <property type="entry name" value="MnmG_GidA"/>
    <property type="match status" value="1"/>
</dbReference>
<dbReference type="InterPro" id="IPR036188">
    <property type="entry name" value="FAD/NAD-bd_sf"/>
</dbReference>
<dbReference type="InterPro" id="IPR049312">
    <property type="entry name" value="GIDA_C_N"/>
</dbReference>
<dbReference type="InterPro" id="IPR004416">
    <property type="entry name" value="MnmG"/>
</dbReference>
<dbReference type="InterPro" id="IPR002218">
    <property type="entry name" value="MnmG-rel"/>
</dbReference>
<dbReference type="InterPro" id="IPR020595">
    <property type="entry name" value="MnmG-rel_CS"/>
</dbReference>
<dbReference type="InterPro" id="IPR026904">
    <property type="entry name" value="MnmG_C"/>
</dbReference>
<dbReference type="InterPro" id="IPR047001">
    <property type="entry name" value="MnmG_C_subdom"/>
</dbReference>
<dbReference type="InterPro" id="IPR044920">
    <property type="entry name" value="MnmG_C_subdom_sf"/>
</dbReference>
<dbReference type="InterPro" id="IPR040131">
    <property type="entry name" value="MnmG_N"/>
</dbReference>
<dbReference type="NCBIfam" id="TIGR00136">
    <property type="entry name" value="mnmG_gidA"/>
    <property type="match status" value="1"/>
</dbReference>
<dbReference type="PANTHER" id="PTHR11806">
    <property type="entry name" value="GLUCOSE INHIBITED DIVISION PROTEIN A"/>
    <property type="match status" value="1"/>
</dbReference>
<dbReference type="PANTHER" id="PTHR11806:SF0">
    <property type="entry name" value="PROTEIN MTO1 HOMOLOG, MITOCHONDRIAL"/>
    <property type="match status" value="1"/>
</dbReference>
<dbReference type="Pfam" id="PF01134">
    <property type="entry name" value="GIDA"/>
    <property type="match status" value="1"/>
</dbReference>
<dbReference type="Pfam" id="PF21680">
    <property type="entry name" value="GIDA_C_1st"/>
    <property type="match status" value="1"/>
</dbReference>
<dbReference type="Pfam" id="PF13932">
    <property type="entry name" value="SAM_GIDA_C"/>
    <property type="match status" value="1"/>
</dbReference>
<dbReference type="SMART" id="SM01228">
    <property type="entry name" value="GIDA_assoc_3"/>
    <property type="match status" value="1"/>
</dbReference>
<dbReference type="SUPFAM" id="SSF51905">
    <property type="entry name" value="FAD/NAD(P)-binding domain"/>
    <property type="match status" value="1"/>
</dbReference>
<dbReference type="PROSITE" id="PS01280">
    <property type="entry name" value="GIDA_1"/>
    <property type="match status" value="1"/>
</dbReference>
<dbReference type="PROSITE" id="PS01281">
    <property type="entry name" value="GIDA_2"/>
    <property type="match status" value="1"/>
</dbReference>
<evidence type="ECO:0000255" key="1">
    <source>
        <dbReference type="HAMAP-Rule" id="MF_00129"/>
    </source>
</evidence>
<gene>
    <name evidence="1" type="primary">mnmG</name>
    <name evidence="1" type="synonym">gidA</name>
    <name type="ordered locus">WP0643</name>
</gene>
<protein>
    <recommendedName>
        <fullName evidence="1">tRNA uridine 5-carboxymethylaminomethyl modification enzyme MnmG</fullName>
    </recommendedName>
    <alternativeName>
        <fullName evidence="1">Glucose-inhibited division protein A</fullName>
    </alternativeName>
</protein>
<name>MNMG_WOLPP</name>
<accession>B3CLI3</accession>
<keyword id="KW-0963">Cytoplasm</keyword>
<keyword id="KW-0274">FAD</keyword>
<keyword id="KW-0285">Flavoprotein</keyword>
<keyword id="KW-0520">NAD</keyword>
<keyword id="KW-0819">tRNA processing</keyword>
<feature type="chain" id="PRO_1000095671" description="tRNA uridine 5-carboxymethylaminomethyl modification enzyme MnmG">
    <location>
        <begin position="1"/>
        <end position="682"/>
    </location>
</feature>
<feature type="binding site" evidence="1">
    <location>
        <begin position="10"/>
        <end position="15"/>
    </location>
    <ligand>
        <name>FAD</name>
        <dbReference type="ChEBI" id="CHEBI:57692"/>
    </ligand>
</feature>
<feature type="binding site" evidence="1">
    <location>
        <begin position="273"/>
        <end position="287"/>
    </location>
    <ligand>
        <name>NAD(+)</name>
        <dbReference type="ChEBI" id="CHEBI:57540"/>
    </ligand>
</feature>
<proteinExistence type="inferred from homology"/>
<organism>
    <name type="scientific">Wolbachia pipientis subsp. Culex pipiens (strain wPip)</name>
    <dbReference type="NCBI Taxonomy" id="570417"/>
    <lineage>
        <taxon>Bacteria</taxon>
        <taxon>Pseudomonadati</taxon>
        <taxon>Pseudomonadota</taxon>
        <taxon>Alphaproteobacteria</taxon>
        <taxon>Rickettsiales</taxon>
        <taxon>Anaplasmataceae</taxon>
        <taxon>Wolbachieae</taxon>
        <taxon>Wolbachia</taxon>
    </lineage>
</organism>